<protein>
    <recommendedName>
        <fullName evidence="2">Ranatuerin-3</fullName>
    </recommendedName>
</protein>
<reference key="1">
    <citation type="journal article" date="1998" name="Biochem. Biophys. Res. Commun.">
        <title>Ranatuerins: antimicrobial peptides isolated from the skin of the American bullfrog, Rana catesbeiana.</title>
        <authorList>
            <person name="Goraya J."/>
            <person name="Knoop F.C."/>
            <person name="Conlon J.M."/>
        </authorList>
    </citation>
    <scope>PROTEIN SEQUENCE</scope>
    <scope>FUNCTION</scope>
    <scope>SUBCELLULAR LOCATION</scope>
    <source>
        <tissue>Skin secretion</tissue>
    </source>
</reference>
<dbReference type="SMR" id="P82780"/>
<dbReference type="GO" id="GO:0005576">
    <property type="term" value="C:extracellular region"/>
    <property type="evidence" value="ECO:0007669"/>
    <property type="project" value="UniProtKB-SubCell"/>
</dbReference>
<dbReference type="GO" id="GO:0042742">
    <property type="term" value="P:defense response to bacterium"/>
    <property type="evidence" value="ECO:0007669"/>
    <property type="project" value="UniProtKB-KW"/>
</dbReference>
<organism>
    <name type="scientific">Aquarana catesbeiana</name>
    <name type="common">American bullfrog</name>
    <name type="synonym">Rana catesbeiana</name>
    <dbReference type="NCBI Taxonomy" id="8400"/>
    <lineage>
        <taxon>Eukaryota</taxon>
        <taxon>Metazoa</taxon>
        <taxon>Chordata</taxon>
        <taxon>Craniata</taxon>
        <taxon>Vertebrata</taxon>
        <taxon>Euteleostomi</taxon>
        <taxon>Amphibia</taxon>
        <taxon>Batrachia</taxon>
        <taxon>Anura</taxon>
        <taxon>Neobatrachia</taxon>
        <taxon>Ranoidea</taxon>
        <taxon>Ranidae</taxon>
        <taxon>Aquarana</taxon>
    </lineage>
</organism>
<proteinExistence type="evidence at protein level"/>
<name>RN2X3_AQUCT</name>
<comment type="function">
    <text evidence="1">Antibacterial activity against Gram-positive bacterium S.aureus (MIC=60 uM). Shows no detectable hemolytic activity towards human erythrocytes.</text>
</comment>
<comment type="subcellular location">
    <subcellularLocation>
        <location evidence="1">Secreted</location>
    </subcellularLocation>
</comment>
<comment type="tissue specificity">
    <text evidence="4">Expressed by the skin glands.</text>
</comment>
<comment type="similarity">
    <text evidence="3">Belongs to the frog skin active peptide (FSAP) family. Ranatuerin subfamily.</text>
</comment>
<keyword id="KW-0878">Amphibian defense peptide</keyword>
<keyword id="KW-0044">Antibiotic</keyword>
<keyword id="KW-0929">Antimicrobial</keyword>
<keyword id="KW-0903">Direct protein sequencing</keyword>
<keyword id="KW-1015">Disulfide bond</keyword>
<keyword id="KW-0964">Secreted</keyword>
<evidence type="ECO:0000269" key="1">
    <source>
    </source>
</evidence>
<evidence type="ECO:0000303" key="2">
    <source>
    </source>
</evidence>
<evidence type="ECO:0000305" key="3"/>
<evidence type="ECO:0000305" key="4">
    <source>
    </source>
</evidence>
<feature type="peptide" id="PRO_0000044657" description="Ranatuerin-3" evidence="1">
    <location>
        <begin position="1"/>
        <end position="32"/>
    </location>
</feature>
<feature type="disulfide bond" evidence="4">
    <location>
        <begin position="23"/>
        <end position="28"/>
    </location>
</feature>
<sequence>GFLDIINKLGKTFAGHMLDKIKCTIGTCPPSP</sequence>
<accession>P82780</accession>